<name>PHT13_ORYSJ</name>
<keyword id="KW-0472">Membrane</keyword>
<keyword id="KW-0592">Phosphate transport</keyword>
<keyword id="KW-1185">Reference proteome</keyword>
<keyword id="KW-0769">Symport</keyword>
<keyword id="KW-0812">Transmembrane</keyword>
<keyword id="KW-1133">Transmembrane helix</keyword>
<keyword id="KW-0813">Transport</keyword>
<accession>Q7XDZ7</accession>
<accession>Q0IXE4</accession>
<accession>Q8H6H3</accession>
<accession>Q9M562</accession>
<comment type="function">
    <text evidence="1">High-affinity transporter for external inorganic phosphate.</text>
</comment>
<comment type="subcellular location">
    <subcellularLocation>
        <location evidence="1">Membrane</location>
        <topology evidence="1">Multi-pass membrane protein</topology>
    </subcellularLocation>
</comment>
<comment type="tissue specificity">
    <text evidence="3">Expressed at low levels in roots.</text>
</comment>
<comment type="induction">
    <text>Not induced in roots by phosphate starvation.</text>
</comment>
<comment type="miscellaneous">
    <text>Although related to the sugar transporter family, it does not transport sugars.</text>
</comment>
<comment type="similarity">
    <text evidence="4">Belongs to the major facilitator superfamily. Phosphate:H(+) symporter (TC 2.A.1.9) family.</text>
</comment>
<comment type="sequence caution" evidence="4">
    <conflict type="erroneous gene model prediction">
        <sequence resource="EMBL-CDS" id="BAF26621"/>
    </conflict>
</comment>
<organism>
    <name type="scientific">Oryza sativa subsp. japonica</name>
    <name type="common">Rice</name>
    <dbReference type="NCBI Taxonomy" id="39947"/>
    <lineage>
        <taxon>Eukaryota</taxon>
        <taxon>Viridiplantae</taxon>
        <taxon>Streptophyta</taxon>
        <taxon>Embryophyta</taxon>
        <taxon>Tracheophyta</taxon>
        <taxon>Spermatophyta</taxon>
        <taxon>Magnoliopsida</taxon>
        <taxon>Liliopsida</taxon>
        <taxon>Poales</taxon>
        <taxon>Poaceae</taxon>
        <taxon>BOP clade</taxon>
        <taxon>Oryzoideae</taxon>
        <taxon>Oryzeae</taxon>
        <taxon>Oryzinae</taxon>
        <taxon>Oryza</taxon>
        <taxon>Oryza sativa</taxon>
    </lineage>
</organism>
<gene>
    <name type="primary">PHT1-3</name>
    <name type="synonym">PT1</name>
    <name type="synonym">PT3</name>
    <name type="ordered locus">Os10g0444600</name>
    <name type="ordered locus">LOC_Os10g30770</name>
    <name type="ORF">OsJ_030442</name>
</gene>
<reference key="1">
    <citation type="journal article" date="2002" name="Proc. Natl. Acad. Sci. U.S.A.">
        <title>Rice phosphate transporters include an evolutionarily divergent gene specifically activated in arbuscular mycorrhizal symbiosis.</title>
        <authorList>
            <person name="Paszkowski U."/>
            <person name="Kroken S."/>
            <person name="Roux C."/>
            <person name="Briggs S.P."/>
        </authorList>
    </citation>
    <scope>NUCLEOTIDE SEQUENCE [GENOMIC DNA]</scope>
    <scope>TISSUE SPECIFICITY</scope>
</reference>
<reference key="2">
    <citation type="journal article" date="2003" name="Science">
        <title>In-depth view of structure, activity, and evolution of rice chromosome 10.</title>
        <authorList>
            <person name="Yu Y."/>
            <person name="Rambo T."/>
            <person name="Currie J."/>
            <person name="Saski C."/>
            <person name="Kim H.-R."/>
            <person name="Collura K."/>
            <person name="Thompson S."/>
            <person name="Simmons J."/>
            <person name="Yang T.-J."/>
            <person name="Nah G."/>
            <person name="Patel A.J."/>
            <person name="Thurmond S."/>
            <person name="Henry D."/>
            <person name="Oates R."/>
            <person name="Palmer M."/>
            <person name="Pries G."/>
            <person name="Gibson J."/>
            <person name="Anderson H."/>
            <person name="Paradkar M."/>
            <person name="Crane L."/>
            <person name="Dale J."/>
            <person name="Carver M.B."/>
            <person name="Wood T."/>
            <person name="Frisch D."/>
            <person name="Engler F."/>
            <person name="Soderlund C."/>
            <person name="Palmer L.E."/>
            <person name="Teytelman L."/>
            <person name="Nascimento L."/>
            <person name="De la Bastide M."/>
            <person name="Spiegel L."/>
            <person name="Ware D."/>
            <person name="O'Shaughnessy A."/>
            <person name="Dike S."/>
            <person name="Dedhia N."/>
            <person name="Preston R."/>
            <person name="Huang E."/>
            <person name="Ferraro K."/>
            <person name="Kuit K."/>
            <person name="Miller B."/>
            <person name="Zutavern T."/>
            <person name="Katzenberger F."/>
            <person name="Muller S."/>
            <person name="Balija V."/>
            <person name="Martienssen R.A."/>
            <person name="Stein L."/>
            <person name="Minx P."/>
            <person name="Johnson D."/>
            <person name="Cordum H."/>
            <person name="Mardis E."/>
            <person name="Cheng Z."/>
            <person name="Jiang J."/>
            <person name="Wilson R."/>
            <person name="McCombie W.R."/>
            <person name="Wing R.A."/>
            <person name="Yuan Q."/>
            <person name="Ouyang S."/>
            <person name="Liu J."/>
            <person name="Jones K.M."/>
            <person name="Gansberger K."/>
            <person name="Moffat K."/>
            <person name="Hill J."/>
            <person name="Tsitrin T."/>
            <person name="Overton L."/>
            <person name="Bera J."/>
            <person name="Kim M."/>
            <person name="Jin S."/>
            <person name="Tallon L."/>
            <person name="Ciecko A."/>
            <person name="Pai G."/>
            <person name="Van Aken S."/>
            <person name="Utterback T."/>
            <person name="Reidmuller S."/>
            <person name="Bormann J."/>
            <person name="Feldblyum T."/>
            <person name="Hsiao J."/>
            <person name="Zismann V."/>
            <person name="Blunt S."/>
            <person name="de Vazeille A.R."/>
            <person name="Shaffer T."/>
            <person name="Koo H."/>
            <person name="Suh B."/>
            <person name="Yang Q."/>
            <person name="Haas B."/>
            <person name="Peterson J."/>
            <person name="Pertea M."/>
            <person name="Volfovsky N."/>
            <person name="Wortman J."/>
            <person name="White O."/>
            <person name="Salzberg S.L."/>
            <person name="Fraser C.M."/>
            <person name="Buell C.R."/>
            <person name="Messing J."/>
            <person name="Song R."/>
            <person name="Fuks G."/>
            <person name="Llaca V."/>
            <person name="Kovchak S."/>
            <person name="Young S."/>
            <person name="Bowers J.E."/>
            <person name="Paterson A.H."/>
            <person name="Johns M.A."/>
            <person name="Mao L."/>
            <person name="Pan H."/>
            <person name="Dean R.A."/>
        </authorList>
    </citation>
    <scope>NUCLEOTIDE SEQUENCE [LARGE SCALE GENOMIC DNA]</scope>
    <source>
        <strain>cv. Nipponbare</strain>
    </source>
</reference>
<reference key="3">
    <citation type="journal article" date="2005" name="Nature">
        <title>The map-based sequence of the rice genome.</title>
        <authorList>
            <consortium name="International rice genome sequencing project (IRGSP)"/>
        </authorList>
    </citation>
    <scope>NUCLEOTIDE SEQUENCE [LARGE SCALE GENOMIC DNA]</scope>
    <source>
        <strain>cv. Nipponbare</strain>
    </source>
</reference>
<reference key="4">
    <citation type="journal article" date="2008" name="Nucleic Acids Res.">
        <title>The rice annotation project database (RAP-DB): 2008 update.</title>
        <authorList>
            <consortium name="The rice annotation project (RAP)"/>
        </authorList>
    </citation>
    <scope>GENOME REANNOTATION</scope>
    <source>
        <strain>cv. Nipponbare</strain>
    </source>
</reference>
<reference key="5">
    <citation type="journal article" date="2013" name="Rice">
        <title>Improvement of the Oryza sativa Nipponbare reference genome using next generation sequence and optical map data.</title>
        <authorList>
            <person name="Kawahara Y."/>
            <person name="de la Bastide M."/>
            <person name="Hamilton J.P."/>
            <person name="Kanamori H."/>
            <person name="McCombie W.R."/>
            <person name="Ouyang S."/>
            <person name="Schwartz D.C."/>
            <person name="Tanaka T."/>
            <person name="Wu J."/>
            <person name="Zhou S."/>
            <person name="Childs K.L."/>
            <person name="Davidson R.M."/>
            <person name="Lin H."/>
            <person name="Quesada-Ocampo L."/>
            <person name="Vaillancourt B."/>
            <person name="Sakai H."/>
            <person name="Lee S.S."/>
            <person name="Kim J."/>
            <person name="Numa H."/>
            <person name="Itoh T."/>
            <person name="Buell C.R."/>
            <person name="Matsumoto T."/>
        </authorList>
    </citation>
    <scope>GENOME REANNOTATION</scope>
    <source>
        <strain>cv. Nipponbare</strain>
    </source>
</reference>
<reference key="6">
    <citation type="journal article" date="2005" name="PLoS Biol.">
        <title>The genomes of Oryza sativa: a history of duplications.</title>
        <authorList>
            <person name="Yu J."/>
            <person name="Wang J."/>
            <person name="Lin W."/>
            <person name="Li S."/>
            <person name="Li H."/>
            <person name="Zhou J."/>
            <person name="Ni P."/>
            <person name="Dong W."/>
            <person name="Hu S."/>
            <person name="Zeng C."/>
            <person name="Zhang J."/>
            <person name="Zhang Y."/>
            <person name="Li R."/>
            <person name="Xu Z."/>
            <person name="Li S."/>
            <person name="Li X."/>
            <person name="Zheng H."/>
            <person name="Cong L."/>
            <person name="Lin L."/>
            <person name="Yin J."/>
            <person name="Geng J."/>
            <person name="Li G."/>
            <person name="Shi J."/>
            <person name="Liu J."/>
            <person name="Lv H."/>
            <person name="Li J."/>
            <person name="Wang J."/>
            <person name="Deng Y."/>
            <person name="Ran L."/>
            <person name="Shi X."/>
            <person name="Wang X."/>
            <person name="Wu Q."/>
            <person name="Li C."/>
            <person name="Ren X."/>
            <person name="Wang J."/>
            <person name="Wang X."/>
            <person name="Li D."/>
            <person name="Liu D."/>
            <person name="Zhang X."/>
            <person name="Ji Z."/>
            <person name="Zhao W."/>
            <person name="Sun Y."/>
            <person name="Zhang Z."/>
            <person name="Bao J."/>
            <person name="Han Y."/>
            <person name="Dong L."/>
            <person name="Ji J."/>
            <person name="Chen P."/>
            <person name="Wu S."/>
            <person name="Liu J."/>
            <person name="Xiao Y."/>
            <person name="Bu D."/>
            <person name="Tan J."/>
            <person name="Yang L."/>
            <person name="Ye C."/>
            <person name="Zhang J."/>
            <person name="Xu J."/>
            <person name="Zhou Y."/>
            <person name="Yu Y."/>
            <person name="Zhang B."/>
            <person name="Zhuang S."/>
            <person name="Wei H."/>
            <person name="Liu B."/>
            <person name="Lei M."/>
            <person name="Yu H."/>
            <person name="Li Y."/>
            <person name="Xu H."/>
            <person name="Wei S."/>
            <person name="He X."/>
            <person name="Fang L."/>
            <person name="Zhang Z."/>
            <person name="Zhang Y."/>
            <person name="Huang X."/>
            <person name="Su Z."/>
            <person name="Tong W."/>
            <person name="Li J."/>
            <person name="Tong Z."/>
            <person name="Li S."/>
            <person name="Ye J."/>
            <person name="Wang L."/>
            <person name="Fang L."/>
            <person name="Lei T."/>
            <person name="Chen C.-S."/>
            <person name="Chen H.-C."/>
            <person name="Xu Z."/>
            <person name="Li H."/>
            <person name="Huang H."/>
            <person name="Zhang F."/>
            <person name="Xu H."/>
            <person name="Li N."/>
            <person name="Zhao C."/>
            <person name="Li S."/>
            <person name="Dong L."/>
            <person name="Huang Y."/>
            <person name="Li L."/>
            <person name="Xi Y."/>
            <person name="Qi Q."/>
            <person name="Li W."/>
            <person name="Zhang B."/>
            <person name="Hu W."/>
            <person name="Zhang Y."/>
            <person name="Tian X."/>
            <person name="Jiao Y."/>
            <person name="Liang X."/>
            <person name="Jin J."/>
            <person name="Gao L."/>
            <person name="Zheng W."/>
            <person name="Hao B."/>
            <person name="Liu S.-M."/>
            <person name="Wang W."/>
            <person name="Yuan L."/>
            <person name="Cao M."/>
            <person name="McDermott J."/>
            <person name="Samudrala R."/>
            <person name="Wang J."/>
            <person name="Wong G.K.-S."/>
            <person name="Yang H."/>
        </authorList>
    </citation>
    <scope>NUCLEOTIDE SEQUENCE [LARGE SCALE GENOMIC DNA]</scope>
    <source>
        <strain>cv. Nipponbare</strain>
    </source>
</reference>
<reference key="7">
    <citation type="journal article" date="2001" name="Yi Chuan Xue Bao">
        <title>Differential accumulation of the new high-affinity phosphate transporter candidated gene fragment in rice roots in response to phosphorus deficiency stress.</title>
        <authorList>
            <person name="Yu F.T."/>
            <person name="Zhang A.M."/>
            <person name="Chen S.Y."/>
            <person name="Zhang F.S."/>
        </authorList>
    </citation>
    <scope>NUCLEOTIDE SEQUENCE [MRNA] OF 32-424</scope>
</reference>
<reference key="8">
    <citation type="journal article" date="2008" name="Biotechnol. Lett.">
        <title>Increased expression of OsPT1, a high-affinity phosphate transporter, enhances phosphate acquisition in rice.</title>
        <authorList>
            <person name="Seo H.-M."/>
            <person name="Jung Y."/>
            <person name="Song S."/>
            <person name="Kim Y."/>
            <person name="Kwon T."/>
            <person name="Kim D.-H."/>
            <person name="Jeung S.-J."/>
            <person name="Yi Y.-B."/>
            <person name="Yi G."/>
            <person name="Nam M.-H."/>
            <person name="Nam J."/>
        </authorList>
    </citation>
    <scope>LACK OF INDUCTION</scope>
</reference>
<dbReference type="EMBL" id="AF536963">
    <property type="protein sequence ID" value="AAN39044.1"/>
    <property type="molecule type" value="Genomic_DNA"/>
</dbReference>
<dbReference type="EMBL" id="DP000086">
    <property type="protein sequence ID" value="AAP53993.1"/>
    <property type="molecule type" value="Genomic_DNA"/>
</dbReference>
<dbReference type="EMBL" id="AP008216">
    <property type="protein sequence ID" value="BAF26621.1"/>
    <property type="status" value="ALT_SEQ"/>
    <property type="molecule type" value="Genomic_DNA"/>
</dbReference>
<dbReference type="EMBL" id="AP014966">
    <property type="status" value="NOT_ANNOTATED_CDS"/>
    <property type="molecule type" value="Genomic_DNA"/>
</dbReference>
<dbReference type="EMBL" id="CM000147">
    <property type="protein sequence ID" value="EAZ16233.1"/>
    <property type="molecule type" value="Genomic_DNA"/>
</dbReference>
<dbReference type="EMBL" id="AF239619">
    <property type="protein sequence ID" value="AAF42956.2"/>
    <property type="molecule type" value="mRNA"/>
</dbReference>
<dbReference type="RefSeq" id="XP_015614123.1">
    <property type="nucleotide sequence ID" value="XM_015758637.1"/>
</dbReference>
<dbReference type="SMR" id="Q7XDZ7"/>
<dbReference type="FunCoup" id="Q7XDZ7">
    <property type="interactions" value="380"/>
</dbReference>
<dbReference type="STRING" id="39947.Q7XDZ7"/>
<dbReference type="PaxDb" id="39947-Q7XDZ7"/>
<dbReference type="EnsemblPlants" id="Os10t0444600-01">
    <property type="protein sequence ID" value="Os10t0444600-01"/>
    <property type="gene ID" value="Os10g0444600"/>
</dbReference>
<dbReference type="Gramene" id="Os10t0444600-01">
    <property type="protein sequence ID" value="Os10t0444600-01"/>
    <property type="gene ID" value="Os10g0444600"/>
</dbReference>
<dbReference type="KEGG" id="dosa:Os10g0444600"/>
<dbReference type="eggNOG" id="KOG0252">
    <property type="taxonomic scope" value="Eukaryota"/>
</dbReference>
<dbReference type="InParanoid" id="Q7XDZ7"/>
<dbReference type="OrthoDB" id="433512at2759"/>
<dbReference type="Proteomes" id="UP000000763">
    <property type="component" value="Chromosome 10"/>
</dbReference>
<dbReference type="Proteomes" id="UP000007752">
    <property type="component" value="Chromosome 10"/>
</dbReference>
<dbReference type="Proteomes" id="UP000059680">
    <property type="component" value="Chromosome 10"/>
</dbReference>
<dbReference type="GO" id="GO:0016020">
    <property type="term" value="C:membrane"/>
    <property type="evidence" value="ECO:0007669"/>
    <property type="project" value="UniProtKB-SubCell"/>
</dbReference>
<dbReference type="GO" id="GO:0005315">
    <property type="term" value="F:phosphate transmembrane transporter activity"/>
    <property type="evidence" value="ECO:0007669"/>
    <property type="project" value="InterPro"/>
</dbReference>
<dbReference type="GO" id="GO:0015293">
    <property type="term" value="F:symporter activity"/>
    <property type="evidence" value="ECO:0007669"/>
    <property type="project" value="UniProtKB-KW"/>
</dbReference>
<dbReference type="GO" id="GO:0006817">
    <property type="term" value="P:phosphate ion transport"/>
    <property type="evidence" value="ECO:0007669"/>
    <property type="project" value="UniProtKB-KW"/>
</dbReference>
<dbReference type="CDD" id="cd17364">
    <property type="entry name" value="MFS_PhT"/>
    <property type="match status" value="1"/>
</dbReference>
<dbReference type="FunFam" id="1.20.1250.20:FF:000175">
    <property type="entry name" value="Inorganic phosphate transporter 1-6"/>
    <property type="match status" value="1"/>
</dbReference>
<dbReference type="Gene3D" id="1.20.1250.20">
    <property type="entry name" value="MFS general substrate transporter like domains"/>
    <property type="match status" value="2"/>
</dbReference>
<dbReference type="InterPro" id="IPR020846">
    <property type="entry name" value="MFS_dom"/>
</dbReference>
<dbReference type="InterPro" id="IPR005828">
    <property type="entry name" value="MFS_sugar_transport-like"/>
</dbReference>
<dbReference type="InterPro" id="IPR036259">
    <property type="entry name" value="MFS_trans_sf"/>
</dbReference>
<dbReference type="InterPro" id="IPR004738">
    <property type="entry name" value="Phos_permease"/>
</dbReference>
<dbReference type="NCBIfam" id="TIGR00887">
    <property type="entry name" value="2A0109"/>
    <property type="match status" value="1"/>
</dbReference>
<dbReference type="PANTHER" id="PTHR24064">
    <property type="entry name" value="SOLUTE CARRIER FAMILY 22 MEMBER"/>
    <property type="match status" value="1"/>
</dbReference>
<dbReference type="Pfam" id="PF00083">
    <property type="entry name" value="Sugar_tr"/>
    <property type="match status" value="1"/>
</dbReference>
<dbReference type="SUPFAM" id="SSF103473">
    <property type="entry name" value="MFS general substrate transporter"/>
    <property type="match status" value="1"/>
</dbReference>
<dbReference type="PROSITE" id="PS50850">
    <property type="entry name" value="MFS"/>
    <property type="match status" value="1"/>
</dbReference>
<proteinExistence type="evidence at transcript level"/>
<evidence type="ECO:0000250" key="1"/>
<evidence type="ECO:0000255" key="2"/>
<evidence type="ECO:0000269" key="3">
    <source>
    </source>
</evidence>
<evidence type="ECO:0000305" key="4"/>
<protein>
    <recommendedName>
        <fullName>Probable inorganic phosphate transporter 1-3</fullName>
        <shortName>OsPT3</shortName>
        <shortName>OsPht1;3</shortName>
    </recommendedName>
    <alternativeName>
        <fullName>H(+)/Pi cotransporter</fullName>
    </alternativeName>
    <alternativeName>
        <fullName>OsPT1</fullName>
    </alternativeName>
</protein>
<feature type="chain" id="PRO_0000365482" description="Probable inorganic phosphate transporter 1-3">
    <location>
        <begin position="1"/>
        <end position="526"/>
    </location>
</feature>
<feature type="topological domain" description="Cytoplasmic" evidence="2">
    <location>
        <begin position="1"/>
        <end position="21"/>
    </location>
</feature>
<feature type="transmembrane region" description="Helical" evidence="2">
    <location>
        <begin position="22"/>
        <end position="42"/>
    </location>
</feature>
<feature type="topological domain" description="Extracellular" evidence="2">
    <location>
        <begin position="43"/>
        <end position="70"/>
    </location>
</feature>
<feature type="transmembrane region" description="Helical" evidence="2">
    <location>
        <begin position="71"/>
        <end position="91"/>
    </location>
</feature>
<feature type="topological domain" description="Cytoplasmic" evidence="2">
    <location>
        <begin position="92"/>
        <end position="99"/>
    </location>
</feature>
<feature type="transmembrane region" description="Helical" evidence="2">
    <location>
        <begin position="100"/>
        <end position="120"/>
    </location>
</feature>
<feature type="topological domain" description="Extracellular" evidence="2">
    <location>
        <begin position="121"/>
        <end position="124"/>
    </location>
</feature>
<feature type="transmembrane region" description="Helical" evidence="2">
    <location>
        <begin position="125"/>
        <end position="145"/>
    </location>
</feature>
<feature type="topological domain" description="Cytoplasmic" evidence="2">
    <location>
        <begin position="146"/>
        <end position="163"/>
    </location>
</feature>
<feature type="transmembrane region" description="Helical" evidence="2">
    <location>
        <begin position="164"/>
        <end position="184"/>
    </location>
</feature>
<feature type="topological domain" description="Extracellular" evidence="2">
    <location>
        <begin position="185"/>
        <end position="211"/>
    </location>
</feature>
<feature type="transmembrane region" description="Helical" evidence="2">
    <location>
        <begin position="212"/>
        <end position="232"/>
    </location>
</feature>
<feature type="topological domain" description="Cytoplasmic" evidence="2">
    <location>
        <begin position="233"/>
        <end position="294"/>
    </location>
</feature>
<feature type="transmembrane region" description="Helical" evidence="2">
    <location>
        <begin position="295"/>
        <end position="315"/>
    </location>
</feature>
<feature type="topological domain" description="Extracellular" evidence="2">
    <location>
        <begin position="316"/>
        <end position="349"/>
    </location>
</feature>
<feature type="transmembrane region" description="Helical" evidence="2">
    <location>
        <begin position="350"/>
        <end position="370"/>
    </location>
</feature>
<feature type="topological domain" description="Cytoplasmic" evidence="2">
    <location>
        <begin position="371"/>
        <end position="373"/>
    </location>
</feature>
<feature type="transmembrane region" description="Helical" evidence="2">
    <location>
        <begin position="374"/>
        <end position="394"/>
    </location>
</feature>
<feature type="topological domain" description="Extracellular" evidence="2">
    <location>
        <begin position="395"/>
        <end position="407"/>
    </location>
</feature>
<feature type="transmembrane region" description="Helical" evidence="2">
    <location>
        <begin position="408"/>
        <end position="428"/>
    </location>
</feature>
<feature type="topological domain" description="Cytoplasmic" evidence="2">
    <location>
        <begin position="429"/>
        <end position="444"/>
    </location>
</feature>
<feature type="transmembrane region" description="Helical" evidence="2">
    <location>
        <begin position="445"/>
        <end position="465"/>
    </location>
</feature>
<feature type="topological domain" description="Extracellular" evidence="2">
    <location>
        <begin position="466"/>
        <end position="483"/>
    </location>
</feature>
<feature type="transmembrane region" description="Helical" evidence="2">
    <location>
        <begin position="484"/>
        <end position="504"/>
    </location>
</feature>
<feature type="topological domain" description="Cytoplasmic" evidence="2">
    <location>
        <begin position="505"/>
        <end position="526"/>
    </location>
</feature>
<feature type="sequence conflict" description="In Ref. 7; AAF42956." evidence="4" ref="7">
    <original>LAGDN</original>
    <variation>IASDT</variation>
    <location>
        <begin position="57"/>
        <end position="61"/>
    </location>
</feature>
<feature type="sequence conflict" description="In Ref. 1; AAN39044." evidence="4" ref="1">
    <original>D</original>
    <variation>E</variation>
    <location>
        <position position="270"/>
    </location>
</feature>
<feature type="sequence conflict" description="In Ref. 7; AAF42956." evidence="4" ref="7">
    <original>Q</original>
    <variation>H</variation>
    <location>
        <position position="290"/>
    </location>
</feature>
<sequence length="526" mass="56929">MADGQLKVLTTLDHARTQWYHFMAIVIAGMGFFTDAYDLFCISLVSKLLGRIYYTDLAGDNPGSLPPNVSAAVNGVALCGTLAGQLFFGWLGDKLGRKSVYGFTLVLMVVCSVASGLSFGRTAKGVVATLCFFRFWLGFGIGGDYPLSATIMSEYANKRTRGAFIAAVFAMQGFGILFGAIVALVVSAGFRNAYPAPSYADGRAASLVPEADYVWRIILMFGTVPAALTYYWRMKMPETARYTALIARNAKQAAADMSKVLDTEIQEDADRAEAVAAGGAGNEWGLFSRQFVRRHGVHLVATTSTWFLLDIAFYSQNLFQKDIFSKVGWIPPARTMNAVEEVFRIARAQALIALCGTIPGYWFTVAFIDVAGRFAIQLMGFAMMTVFMLGLAAPYHHWTTPGNHTGFVVMYGFTFFFANFGPNATTFIVPAEIYPARLRSTCHGISAAAGKAGAIVGAFGFLYAAQDPHKPEAGYKPGIGIRNALFVLAGTNFLGMLMTLLVPESKGMSLEEVSKENVADDEEATA</sequence>